<reference key="1">
    <citation type="submission" date="2008-02" db="EMBL/GenBank/DDBJ databases">
        <title>Complete sequence of Haemophilus somnus 2336.</title>
        <authorList>
            <consortium name="US DOE Joint Genome Institute"/>
            <person name="Siddaramappa S."/>
            <person name="Duncan A.J."/>
            <person name="Challacombe J.F."/>
            <person name="Rainey D."/>
            <person name="Gillaspy A.F."/>
            <person name="Carson M."/>
            <person name="Gipson J."/>
            <person name="Gipson M."/>
            <person name="Bruce D."/>
            <person name="Detter J.C."/>
            <person name="Han C.S."/>
            <person name="Land M."/>
            <person name="Tapia R."/>
            <person name="Thompson L.S."/>
            <person name="Orvis J."/>
            <person name="Zaitshik J."/>
            <person name="Barnes G."/>
            <person name="Brettin T.S."/>
            <person name="Dyer D.W."/>
            <person name="Inzana T.J."/>
        </authorList>
    </citation>
    <scope>NUCLEOTIDE SEQUENCE [LARGE SCALE GENOMIC DNA]</scope>
    <source>
        <strain>2336</strain>
    </source>
</reference>
<proteinExistence type="inferred from homology"/>
<accession>B0UWL8</accession>
<comment type="function">
    <text evidence="1">Specifically methylates the adenine in position 37 of tRNA(1)(Val) (anticodon cmo5UAC).</text>
</comment>
<comment type="catalytic activity">
    <reaction evidence="1">
        <text>adenosine(37) in tRNA1(Val) + S-adenosyl-L-methionine = N(6)-methyladenosine(37) in tRNA1(Val) + S-adenosyl-L-homocysteine + H(+)</text>
        <dbReference type="Rhea" id="RHEA:43160"/>
        <dbReference type="Rhea" id="RHEA-COMP:10369"/>
        <dbReference type="Rhea" id="RHEA-COMP:10370"/>
        <dbReference type="ChEBI" id="CHEBI:15378"/>
        <dbReference type="ChEBI" id="CHEBI:57856"/>
        <dbReference type="ChEBI" id="CHEBI:59789"/>
        <dbReference type="ChEBI" id="CHEBI:74411"/>
        <dbReference type="ChEBI" id="CHEBI:74449"/>
        <dbReference type="EC" id="2.1.1.223"/>
    </reaction>
</comment>
<comment type="subcellular location">
    <subcellularLocation>
        <location evidence="1">Cytoplasm</location>
    </subcellularLocation>
</comment>
<comment type="similarity">
    <text evidence="1">Belongs to the methyltransferase superfamily. tRNA (adenine-N(6)-)-methyltransferase family.</text>
</comment>
<evidence type="ECO:0000255" key="1">
    <source>
        <dbReference type="HAMAP-Rule" id="MF_01872"/>
    </source>
</evidence>
<feature type="chain" id="PRO_0000387388" description="tRNA1(Val) (adenine(37)-N6)-methyltransferase">
    <location>
        <begin position="1"/>
        <end position="236"/>
    </location>
</feature>
<organism>
    <name type="scientific">Histophilus somni (strain 2336)</name>
    <name type="common">Haemophilus somnus</name>
    <dbReference type="NCBI Taxonomy" id="228400"/>
    <lineage>
        <taxon>Bacteria</taxon>
        <taxon>Pseudomonadati</taxon>
        <taxon>Pseudomonadota</taxon>
        <taxon>Gammaproteobacteria</taxon>
        <taxon>Pasteurellales</taxon>
        <taxon>Pasteurellaceae</taxon>
        <taxon>Histophilus</taxon>
    </lineage>
</organism>
<gene>
    <name type="ordered locus">HSM_0322</name>
</gene>
<keyword id="KW-0963">Cytoplasm</keyword>
<keyword id="KW-0489">Methyltransferase</keyword>
<keyword id="KW-0949">S-adenosyl-L-methionine</keyword>
<keyword id="KW-0808">Transferase</keyword>
<keyword id="KW-0819">tRNA processing</keyword>
<name>TRMN6_HISS2</name>
<sequence length="236" mass="27012">MAKKQEFTFKQFHINQDQCAMKVGTDGILLGAWANINQANTLLDLGTGTGLIALMLAQRSPEHCQISAVELDQLAYLQAKDNIQQSPWANKIKIFQQDIIVFAQDCEHKFDVITANPPYFKQGVDCASKQRNLARYTLTQSHLDWLNAAEKLLNLTGEIHLILPFEEGKSLQKKCGLFCIRECKIITKAGKTPQRLLLSFSREERKCEESQLVIYDRNNQYSTEFKTLTQDFYLNF</sequence>
<protein>
    <recommendedName>
        <fullName evidence="1">tRNA1(Val) (adenine(37)-N6)-methyltransferase</fullName>
        <ecNumber evidence="1">2.1.1.223</ecNumber>
    </recommendedName>
    <alternativeName>
        <fullName evidence="1">tRNA m6A37 methyltransferase</fullName>
    </alternativeName>
</protein>
<dbReference type="EC" id="2.1.1.223" evidence="1"/>
<dbReference type="EMBL" id="CP000947">
    <property type="protein sequence ID" value="ACA31955.1"/>
    <property type="molecule type" value="Genomic_DNA"/>
</dbReference>
<dbReference type="RefSeq" id="WP_012341184.1">
    <property type="nucleotide sequence ID" value="NC_010519.1"/>
</dbReference>
<dbReference type="SMR" id="B0UWL8"/>
<dbReference type="STRING" id="228400.HSM_0322"/>
<dbReference type="GeneID" id="31486602"/>
<dbReference type="KEGG" id="hsm:HSM_0322"/>
<dbReference type="HOGENOM" id="CLU_061983_0_0_6"/>
<dbReference type="GO" id="GO:0005737">
    <property type="term" value="C:cytoplasm"/>
    <property type="evidence" value="ECO:0007669"/>
    <property type="project" value="UniProtKB-SubCell"/>
</dbReference>
<dbReference type="GO" id="GO:0016430">
    <property type="term" value="F:tRNA (adenine-N6)-methyltransferase activity"/>
    <property type="evidence" value="ECO:0007669"/>
    <property type="project" value="UniProtKB-UniRule"/>
</dbReference>
<dbReference type="GO" id="GO:0032259">
    <property type="term" value="P:methylation"/>
    <property type="evidence" value="ECO:0007669"/>
    <property type="project" value="UniProtKB-KW"/>
</dbReference>
<dbReference type="GO" id="GO:0008033">
    <property type="term" value="P:tRNA processing"/>
    <property type="evidence" value="ECO:0007669"/>
    <property type="project" value="UniProtKB-UniRule"/>
</dbReference>
<dbReference type="CDD" id="cd02440">
    <property type="entry name" value="AdoMet_MTases"/>
    <property type="match status" value="1"/>
</dbReference>
<dbReference type="Gene3D" id="3.40.50.150">
    <property type="entry name" value="Vaccinia Virus protein VP39"/>
    <property type="match status" value="1"/>
</dbReference>
<dbReference type="HAMAP" id="MF_01872">
    <property type="entry name" value="tRNA_methyltr_YfiC"/>
    <property type="match status" value="1"/>
</dbReference>
<dbReference type="InterPro" id="IPR029063">
    <property type="entry name" value="SAM-dependent_MTases_sf"/>
</dbReference>
<dbReference type="InterPro" id="IPR007848">
    <property type="entry name" value="Small_mtfrase_dom"/>
</dbReference>
<dbReference type="InterPro" id="IPR050210">
    <property type="entry name" value="tRNA_Adenine-N(6)_MTase"/>
</dbReference>
<dbReference type="InterPro" id="IPR022882">
    <property type="entry name" value="tRNA_adenine-N6_MeTrfase"/>
</dbReference>
<dbReference type="PANTHER" id="PTHR47739">
    <property type="entry name" value="TRNA1(VAL) (ADENINE(37)-N6)-METHYLTRANSFERASE"/>
    <property type="match status" value="1"/>
</dbReference>
<dbReference type="PANTHER" id="PTHR47739:SF1">
    <property type="entry name" value="TRNA1(VAL) (ADENINE(37)-N6)-METHYLTRANSFERASE"/>
    <property type="match status" value="1"/>
</dbReference>
<dbReference type="Pfam" id="PF05175">
    <property type="entry name" value="MTS"/>
    <property type="match status" value="1"/>
</dbReference>
<dbReference type="SUPFAM" id="SSF53335">
    <property type="entry name" value="S-adenosyl-L-methionine-dependent methyltransferases"/>
    <property type="match status" value="1"/>
</dbReference>